<accession>A7MFI7</accession>
<name>CLPX_CROS8</name>
<sequence length="424" mass="46364">MTDKRKDSSGKLLYCSFCGKSQHEVRKLIAGPSVYICDECVDLCNDIIREEIKEVAPHRERSALPTPHEIRSHLDDYVIGQEKAKKVLAVAVYNHYKRLRNGDTSNGVELGKSNILLIGPTGSGKTLLAETLARLLDVPFTMADATTLTEAGYVGEDVENIIQKLLQKCDYDVQKAQRGIVYIDEIDKISRKSDNPSITRDVSGEGVQQALLKLIEGTVAAVPPQGGRKHPQQEFLQVDTSKILFICGGAFAGLDKVIANRVETGSGIGFGATVKGKSQKATEGELLSQVEPEDLIKFGLIPEFIGRLPVVATLNELSEDALIQILKEPKNALTKQYQALFNLEGVELEFRDEALEAIAKKAMSRKTGARGLRSIVEAALLETMYDLPSMEEVEKVVIDESVIAGQSEPLLIYGKPEAQQASGE</sequence>
<feature type="chain" id="PRO_1000024557" description="ATP-dependent Clp protease ATP-binding subunit ClpX">
    <location>
        <begin position="1"/>
        <end position="424"/>
    </location>
</feature>
<feature type="domain" description="ClpX-type ZB" evidence="2">
    <location>
        <begin position="2"/>
        <end position="56"/>
    </location>
</feature>
<feature type="binding site" evidence="2">
    <location>
        <position position="15"/>
    </location>
    <ligand>
        <name>Zn(2+)</name>
        <dbReference type="ChEBI" id="CHEBI:29105"/>
    </ligand>
</feature>
<feature type="binding site" evidence="2">
    <location>
        <position position="18"/>
    </location>
    <ligand>
        <name>Zn(2+)</name>
        <dbReference type="ChEBI" id="CHEBI:29105"/>
    </ligand>
</feature>
<feature type="binding site" evidence="2">
    <location>
        <position position="37"/>
    </location>
    <ligand>
        <name>Zn(2+)</name>
        <dbReference type="ChEBI" id="CHEBI:29105"/>
    </ligand>
</feature>
<feature type="binding site" evidence="2">
    <location>
        <position position="40"/>
    </location>
    <ligand>
        <name>Zn(2+)</name>
        <dbReference type="ChEBI" id="CHEBI:29105"/>
    </ligand>
</feature>
<feature type="binding site" evidence="1">
    <location>
        <begin position="120"/>
        <end position="127"/>
    </location>
    <ligand>
        <name>ATP</name>
        <dbReference type="ChEBI" id="CHEBI:30616"/>
    </ligand>
</feature>
<dbReference type="EMBL" id="CP000783">
    <property type="protein sequence ID" value="ABU78089.1"/>
    <property type="molecule type" value="Genomic_DNA"/>
</dbReference>
<dbReference type="RefSeq" id="WP_004387729.1">
    <property type="nucleotide sequence ID" value="NC_009778.1"/>
</dbReference>
<dbReference type="SMR" id="A7MFI7"/>
<dbReference type="GeneID" id="56731648"/>
<dbReference type="KEGG" id="esa:ESA_02860"/>
<dbReference type="HOGENOM" id="CLU_014218_8_2_6"/>
<dbReference type="Proteomes" id="UP000000260">
    <property type="component" value="Chromosome"/>
</dbReference>
<dbReference type="GO" id="GO:0009376">
    <property type="term" value="C:HslUV protease complex"/>
    <property type="evidence" value="ECO:0007669"/>
    <property type="project" value="TreeGrafter"/>
</dbReference>
<dbReference type="GO" id="GO:0005524">
    <property type="term" value="F:ATP binding"/>
    <property type="evidence" value="ECO:0007669"/>
    <property type="project" value="UniProtKB-UniRule"/>
</dbReference>
<dbReference type="GO" id="GO:0016887">
    <property type="term" value="F:ATP hydrolysis activity"/>
    <property type="evidence" value="ECO:0007669"/>
    <property type="project" value="InterPro"/>
</dbReference>
<dbReference type="GO" id="GO:0140662">
    <property type="term" value="F:ATP-dependent protein folding chaperone"/>
    <property type="evidence" value="ECO:0007669"/>
    <property type="project" value="InterPro"/>
</dbReference>
<dbReference type="GO" id="GO:0046983">
    <property type="term" value="F:protein dimerization activity"/>
    <property type="evidence" value="ECO:0007669"/>
    <property type="project" value="InterPro"/>
</dbReference>
<dbReference type="GO" id="GO:0051082">
    <property type="term" value="F:unfolded protein binding"/>
    <property type="evidence" value="ECO:0007669"/>
    <property type="project" value="UniProtKB-UniRule"/>
</dbReference>
<dbReference type="GO" id="GO:0008270">
    <property type="term" value="F:zinc ion binding"/>
    <property type="evidence" value="ECO:0007669"/>
    <property type="project" value="InterPro"/>
</dbReference>
<dbReference type="GO" id="GO:0051301">
    <property type="term" value="P:cell division"/>
    <property type="evidence" value="ECO:0007669"/>
    <property type="project" value="TreeGrafter"/>
</dbReference>
<dbReference type="GO" id="GO:0051603">
    <property type="term" value="P:proteolysis involved in protein catabolic process"/>
    <property type="evidence" value="ECO:0007669"/>
    <property type="project" value="TreeGrafter"/>
</dbReference>
<dbReference type="CDD" id="cd19497">
    <property type="entry name" value="RecA-like_ClpX"/>
    <property type="match status" value="1"/>
</dbReference>
<dbReference type="FunFam" id="1.10.8.60:FF:000002">
    <property type="entry name" value="ATP-dependent Clp protease ATP-binding subunit ClpX"/>
    <property type="match status" value="1"/>
</dbReference>
<dbReference type="FunFam" id="3.40.50.300:FF:000005">
    <property type="entry name" value="ATP-dependent Clp protease ATP-binding subunit ClpX"/>
    <property type="match status" value="1"/>
</dbReference>
<dbReference type="Gene3D" id="1.10.8.60">
    <property type="match status" value="1"/>
</dbReference>
<dbReference type="Gene3D" id="6.20.220.10">
    <property type="entry name" value="ClpX chaperone, C4-type zinc finger domain"/>
    <property type="match status" value="1"/>
</dbReference>
<dbReference type="Gene3D" id="3.40.50.300">
    <property type="entry name" value="P-loop containing nucleotide triphosphate hydrolases"/>
    <property type="match status" value="1"/>
</dbReference>
<dbReference type="HAMAP" id="MF_00175">
    <property type="entry name" value="ClpX"/>
    <property type="match status" value="1"/>
</dbReference>
<dbReference type="InterPro" id="IPR003593">
    <property type="entry name" value="AAA+_ATPase"/>
</dbReference>
<dbReference type="InterPro" id="IPR050052">
    <property type="entry name" value="ATP-dep_Clp_protease_ClpX"/>
</dbReference>
<dbReference type="InterPro" id="IPR003959">
    <property type="entry name" value="ATPase_AAA_core"/>
</dbReference>
<dbReference type="InterPro" id="IPR019489">
    <property type="entry name" value="Clp_ATPase_C"/>
</dbReference>
<dbReference type="InterPro" id="IPR004487">
    <property type="entry name" value="Clp_protease_ATP-bd_su_ClpX"/>
</dbReference>
<dbReference type="InterPro" id="IPR046425">
    <property type="entry name" value="ClpX_bact"/>
</dbReference>
<dbReference type="InterPro" id="IPR027417">
    <property type="entry name" value="P-loop_NTPase"/>
</dbReference>
<dbReference type="InterPro" id="IPR010603">
    <property type="entry name" value="Znf_CppX_C4"/>
</dbReference>
<dbReference type="InterPro" id="IPR038366">
    <property type="entry name" value="Znf_CppX_C4_sf"/>
</dbReference>
<dbReference type="NCBIfam" id="TIGR00382">
    <property type="entry name" value="clpX"/>
    <property type="match status" value="1"/>
</dbReference>
<dbReference type="NCBIfam" id="NF003745">
    <property type="entry name" value="PRK05342.1"/>
    <property type="match status" value="1"/>
</dbReference>
<dbReference type="PANTHER" id="PTHR48102:SF7">
    <property type="entry name" value="ATP-DEPENDENT CLP PROTEASE ATP-BINDING SUBUNIT CLPX-LIKE, MITOCHONDRIAL"/>
    <property type="match status" value="1"/>
</dbReference>
<dbReference type="PANTHER" id="PTHR48102">
    <property type="entry name" value="ATP-DEPENDENT CLP PROTEASE ATP-BINDING SUBUNIT CLPX-LIKE, MITOCHONDRIAL-RELATED"/>
    <property type="match status" value="1"/>
</dbReference>
<dbReference type="Pfam" id="PF07724">
    <property type="entry name" value="AAA_2"/>
    <property type="match status" value="1"/>
</dbReference>
<dbReference type="Pfam" id="PF10431">
    <property type="entry name" value="ClpB_D2-small"/>
    <property type="match status" value="1"/>
</dbReference>
<dbReference type="Pfam" id="PF06689">
    <property type="entry name" value="zf-C4_ClpX"/>
    <property type="match status" value="1"/>
</dbReference>
<dbReference type="SMART" id="SM00382">
    <property type="entry name" value="AAA"/>
    <property type="match status" value="1"/>
</dbReference>
<dbReference type="SMART" id="SM01086">
    <property type="entry name" value="ClpB_D2-small"/>
    <property type="match status" value="1"/>
</dbReference>
<dbReference type="SMART" id="SM00994">
    <property type="entry name" value="zf-C4_ClpX"/>
    <property type="match status" value="1"/>
</dbReference>
<dbReference type="SUPFAM" id="SSF57716">
    <property type="entry name" value="Glucocorticoid receptor-like (DNA-binding domain)"/>
    <property type="match status" value="1"/>
</dbReference>
<dbReference type="SUPFAM" id="SSF52540">
    <property type="entry name" value="P-loop containing nucleoside triphosphate hydrolases"/>
    <property type="match status" value="1"/>
</dbReference>
<dbReference type="PROSITE" id="PS51902">
    <property type="entry name" value="CLPX_ZB"/>
    <property type="match status" value="1"/>
</dbReference>
<proteinExistence type="inferred from homology"/>
<protein>
    <recommendedName>
        <fullName evidence="1">ATP-dependent Clp protease ATP-binding subunit ClpX</fullName>
    </recommendedName>
</protein>
<comment type="function">
    <text evidence="1">ATP-dependent specificity component of the Clp protease. It directs the protease to specific substrates. Can perform chaperone functions in the absence of ClpP.</text>
</comment>
<comment type="subunit">
    <text evidence="1">Component of the ClpX-ClpP complex. Forms a hexameric ring that, in the presence of ATP, binds to fourteen ClpP subunits assembled into a disk-like structure with a central cavity, resembling the structure of eukaryotic proteasomes.</text>
</comment>
<comment type="similarity">
    <text evidence="1">Belongs to the ClpX chaperone family.</text>
</comment>
<evidence type="ECO:0000255" key="1">
    <source>
        <dbReference type="HAMAP-Rule" id="MF_00175"/>
    </source>
</evidence>
<evidence type="ECO:0000255" key="2">
    <source>
        <dbReference type="PROSITE-ProRule" id="PRU01250"/>
    </source>
</evidence>
<keyword id="KW-0067">ATP-binding</keyword>
<keyword id="KW-0143">Chaperone</keyword>
<keyword id="KW-0479">Metal-binding</keyword>
<keyword id="KW-0547">Nucleotide-binding</keyword>
<keyword id="KW-1185">Reference proteome</keyword>
<keyword id="KW-0862">Zinc</keyword>
<reference key="1">
    <citation type="journal article" date="2010" name="PLoS ONE">
        <title>Genome sequence of Cronobacter sakazakii BAA-894 and comparative genomic hybridization analysis with other Cronobacter species.</title>
        <authorList>
            <person name="Kucerova E."/>
            <person name="Clifton S.W."/>
            <person name="Xia X.Q."/>
            <person name="Long F."/>
            <person name="Porwollik S."/>
            <person name="Fulton L."/>
            <person name="Fronick C."/>
            <person name="Minx P."/>
            <person name="Kyung K."/>
            <person name="Warren W."/>
            <person name="Fulton R."/>
            <person name="Feng D."/>
            <person name="Wollam A."/>
            <person name="Shah N."/>
            <person name="Bhonagiri V."/>
            <person name="Nash W.E."/>
            <person name="Hallsworth-Pepin K."/>
            <person name="Wilson R.K."/>
            <person name="McClelland M."/>
            <person name="Forsythe S.J."/>
        </authorList>
    </citation>
    <scope>NUCLEOTIDE SEQUENCE [LARGE SCALE GENOMIC DNA]</scope>
    <source>
        <strain>ATCC BAA-894</strain>
    </source>
</reference>
<organism>
    <name type="scientific">Cronobacter sakazakii (strain ATCC BAA-894)</name>
    <name type="common">Enterobacter sakazakii</name>
    <dbReference type="NCBI Taxonomy" id="290339"/>
    <lineage>
        <taxon>Bacteria</taxon>
        <taxon>Pseudomonadati</taxon>
        <taxon>Pseudomonadota</taxon>
        <taxon>Gammaproteobacteria</taxon>
        <taxon>Enterobacterales</taxon>
        <taxon>Enterobacteriaceae</taxon>
        <taxon>Cronobacter</taxon>
    </lineage>
</organism>
<gene>
    <name evidence="1" type="primary">clpX</name>
    <name type="ordered locus">ESA_02860</name>
</gene>